<reference key="1">
    <citation type="submission" date="2005-10" db="EMBL/GenBank/DDBJ databases">
        <title>Complete sequence of Pelobacter carbinolicus DSM 2380.</title>
        <authorList>
            <person name="Copeland A."/>
            <person name="Lucas S."/>
            <person name="Lapidus A."/>
            <person name="Barry K."/>
            <person name="Detter J.C."/>
            <person name="Glavina T."/>
            <person name="Hammon N."/>
            <person name="Israni S."/>
            <person name="Pitluck S."/>
            <person name="Chertkov O."/>
            <person name="Schmutz J."/>
            <person name="Larimer F."/>
            <person name="Land M."/>
            <person name="Kyrpides N."/>
            <person name="Ivanova N."/>
            <person name="Richardson P."/>
        </authorList>
    </citation>
    <scope>NUCLEOTIDE SEQUENCE [LARGE SCALE GENOMIC DNA]</scope>
    <source>
        <strain>DSM 2380 / NBRC 103641 / GraBd1</strain>
    </source>
</reference>
<protein>
    <recommendedName>
        <fullName evidence="1">GTPase Obg</fullName>
        <ecNumber evidence="1">3.6.5.-</ecNumber>
    </recommendedName>
    <alternativeName>
        <fullName evidence="1">GTP-binding protein Obg</fullName>
    </alternativeName>
</protein>
<name>OBG_SYNC1</name>
<dbReference type="EC" id="3.6.5.-" evidence="1"/>
<dbReference type="EMBL" id="CP000142">
    <property type="protein sequence ID" value="ABA89819.1"/>
    <property type="molecule type" value="Genomic_DNA"/>
</dbReference>
<dbReference type="RefSeq" id="WP_011342357.1">
    <property type="nucleotide sequence ID" value="NC_007498.2"/>
</dbReference>
<dbReference type="SMR" id="Q3A1D8"/>
<dbReference type="STRING" id="338963.Pcar_2581"/>
<dbReference type="KEGG" id="pca:Pcar_2581"/>
<dbReference type="eggNOG" id="COG0536">
    <property type="taxonomic scope" value="Bacteria"/>
</dbReference>
<dbReference type="HOGENOM" id="CLU_011747_2_0_7"/>
<dbReference type="OrthoDB" id="9807318at2"/>
<dbReference type="Proteomes" id="UP000002534">
    <property type="component" value="Chromosome"/>
</dbReference>
<dbReference type="GO" id="GO:0005737">
    <property type="term" value="C:cytoplasm"/>
    <property type="evidence" value="ECO:0007669"/>
    <property type="project" value="UniProtKB-SubCell"/>
</dbReference>
<dbReference type="GO" id="GO:0005525">
    <property type="term" value="F:GTP binding"/>
    <property type="evidence" value="ECO:0007669"/>
    <property type="project" value="UniProtKB-UniRule"/>
</dbReference>
<dbReference type="GO" id="GO:0003924">
    <property type="term" value="F:GTPase activity"/>
    <property type="evidence" value="ECO:0007669"/>
    <property type="project" value="UniProtKB-UniRule"/>
</dbReference>
<dbReference type="GO" id="GO:0000287">
    <property type="term" value="F:magnesium ion binding"/>
    <property type="evidence" value="ECO:0007669"/>
    <property type="project" value="InterPro"/>
</dbReference>
<dbReference type="GO" id="GO:0042254">
    <property type="term" value="P:ribosome biogenesis"/>
    <property type="evidence" value="ECO:0007669"/>
    <property type="project" value="UniProtKB-UniRule"/>
</dbReference>
<dbReference type="CDD" id="cd01898">
    <property type="entry name" value="Obg"/>
    <property type="match status" value="1"/>
</dbReference>
<dbReference type="FunFam" id="2.70.210.12:FF:000001">
    <property type="entry name" value="GTPase Obg"/>
    <property type="match status" value="1"/>
</dbReference>
<dbReference type="Gene3D" id="2.70.210.12">
    <property type="entry name" value="GTP1/OBG domain"/>
    <property type="match status" value="1"/>
</dbReference>
<dbReference type="Gene3D" id="3.40.50.300">
    <property type="entry name" value="P-loop containing nucleotide triphosphate hydrolases"/>
    <property type="match status" value="1"/>
</dbReference>
<dbReference type="HAMAP" id="MF_01454">
    <property type="entry name" value="GTPase_Obg"/>
    <property type="match status" value="1"/>
</dbReference>
<dbReference type="InterPro" id="IPR031167">
    <property type="entry name" value="G_OBG"/>
</dbReference>
<dbReference type="InterPro" id="IPR006073">
    <property type="entry name" value="GTP-bd"/>
</dbReference>
<dbReference type="InterPro" id="IPR014100">
    <property type="entry name" value="GTP-bd_Obg/CgtA"/>
</dbReference>
<dbReference type="InterPro" id="IPR006074">
    <property type="entry name" value="GTP1-OBG_CS"/>
</dbReference>
<dbReference type="InterPro" id="IPR006169">
    <property type="entry name" value="GTP1_OBG_dom"/>
</dbReference>
<dbReference type="InterPro" id="IPR036726">
    <property type="entry name" value="GTP1_OBG_dom_sf"/>
</dbReference>
<dbReference type="InterPro" id="IPR045086">
    <property type="entry name" value="OBG_GTPase"/>
</dbReference>
<dbReference type="InterPro" id="IPR027417">
    <property type="entry name" value="P-loop_NTPase"/>
</dbReference>
<dbReference type="NCBIfam" id="TIGR02729">
    <property type="entry name" value="Obg_CgtA"/>
    <property type="match status" value="1"/>
</dbReference>
<dbReference type="NCBIfam" id="NF008954">
    <property type="entry name" value="PRK12296.1"/>
    <property type="match status" value="1"/>
</dbReference>
<dbReference type="NCBIfam" id="NF008955">
    <property type="entry name" value="PRK12297.1"/>
    <property type="match status" value="1"/>
</dbReference>
<dbReference type="NCBIfam" id="NF008956">
    <property type="entry name" value="PRK12299.1"/>
    <property type="match status" value="1"/>
</dbReference>
<dbReference type="PANTHER" id="PTHR11702">
    <property type="entry name" value="DEVELOPMENTALLY REGULATED GTP-BINDING PROTEIN-RELATED"/>
    <property type="match status" value="1"/>
</dbReference>
<dbReference type="PANTHER" id="PTHR11702:SF31">
    <property type="entry name" value="MITOCHONDRIAL RIBOSOME-ASSOCIATED GTPASE 2"/>
    <property type="match status" value="1"/>
</dbReference>
<dbReference type="Pfam" id="PF01018">
    <property type="entry name" value="GTP1_OBG"/>
    <property type="match status" value="1"/>
</dbReference>
<dbReference type="Pfam" id="PF01926">
    <property type="entry name" value="MMR_HSR1"/>
    <property type="match status" value="1"/>
</dbReference>
<dbReference type="PIRSF" id="PIRSF002401">
    <property type="entry name" value="GTP_bd_Obg/CgtA"/>
    <property type="match status" value="1"/>
</dbReference>
<dbReference type="PRINTS" id="PR00326">
    <property type="entry name" value="GTP1OBG"/>
</dbReference>
<dbReference type="SUPFAM" id="SSF82051">
    <property type="entry name" value="Obg GTP-binding protein N-terminal domain"/>
    <property type="match status" value="1"/>
</dbReference>
<dbReference type="SUPFAM" id="SSF52540">
    <property type="entry name" value="P-loop containing nucleoside triphosphate hydrolases"/>
    <property type="match status" value="1"/>
</dbReference>
<dbReference type="PROSITE" id="PS51710">
    <property type="entry name" value="G_OBG"/>
    <property type="match status" value="1"/>
</dbReference>
<dbReference type="PROSITE" id="PS00905">
    <property type="entry name" value="GTP1_OBG"/>
    <property type="match status" value="1"/>
</dbReference>
<dbReference type="PROSITE" id="PS51883">
    <property type="entry name" value="OBG"/>
    <property type="match status" value="1"/>
</dbReference>
<organism>
    <name type="scientific">Syntrophotalea carbinolica (strain DSM 2380 / NBRC 103641 / GraBd1)</name>
    <name type="common">Pelobacter carbinolicus</name>
    <dbReference type="NCBI Taxonomy" id="338963"/>
    <lineage>
        <taxon>Bacteria</taxon>
        <taxon>Pseudomonadati</taxon>
        <taxon>Thermodesulfobacteriota</taxon>
        <taxon>Desulfuromonadia</taxon>
        <taxon>Desulfuromonadales</taxon>
        <taxon>Syntrophotaleaceae</taxon>
        <taxon>Syntrophotalea</taxon>
    </lineage>
</organism>
<feature type="chain" id="PRO_0000386113" description="GTPase Obg">
    <location>
        <begin position="1"/>
        <end position="356"/>
    </location>
</feature>
<feature type="domain" description="Obg" evidence="2">
    <location>
        <begin position="1"/>
        <end position="159"/>
    </location>
</feature>
<feature type="domain" description="OBG-type G" evidence="1">
    <location>
        <begin position="160"/>
        <end position="331"/>
    </location>
</feature>
<feature type="binding site" evidence="1">
    <location>
        <begin position="166"/>
        <end position="173"/>
    </location>
    <ligand>
        <name>GTP</name>
        <dbReference type="ChEBI" id="CHEBI:37565"/>
    </ligand>
</feature>
<feature type="binding site" evidence="1">
    <location>
        <position position="173"/>
    </location>
    <ligand>
        <name>Mg(2+)</name>
        <dbReference type="ChEBI" id="CHEBI:18420"/>
    </ligand>
</feature>
<feature type="binding site" evidence="1">
    <location>
        <begin position="191"/>
        <end position="195"/>
    </location>
    <ligand>
        <name>GTP</name>
        <dbReference type="ChEBI" id="CHEBI:37565"/>
    </ligand>
</feature>
<feature type="binding site" evidence="1">
    <location>
        <position position="193"/>
    </location>
    <ligand>
        <name>Mg(2+)</name>
        <dbReference type="ChEBI" id="CHEBI:18420"/>
    </ligand>
</feature>
<feature type="binding site" evidence="1">
    <location>
        <begin position="213"/>
        <end position="216"/>
    </location>
    <ligand>
        <name>GTP</name>
        <dbReference type="ChEBI" id="CHEBI:37565"/>
    </ligand>
</feature>
<feature type="binding site" evidence="1">
    <location>
        <begin position="283"/>
        <end position="286"/>
    </location>
    <ligand>
        <name>GTP</name>
        <dbReference type="ChEBI" id="CHEBI:37565"/>
    </ligand>
</feature>
<feature type="binding site" evidence="1">
    <location>
        <begin position="312"/>
        <end position="314"/>
    </location>
    <ligand>
        <name>GTP</name>
        <dbReference type="ChEBI" id="CHEBI:37565"/>
    </ligand>
</feature>
<proteinExistence type="inferred from homology"/>
<keyword id="KW-0963">Cytoplasm</keyword>
<keyword id="KW-0342">GTP-binding</keyword>
<keyword id="KW-0378">Hydrolase</keyword>
<keyword id="KW-0460">Magnesium</keyword>
<keyword id="KW-0479">Metal-binding</keyword>
<keyword id="KW-0547">Nucleotide-binding</keyword>
<keyword id="KW-1185">Reference proteome</keyword>
<evidence type="ECO:0000255" key="1">
    <source>
        <dbReference type="HAMAP-Rule" id="MF_01454"/>
    </source>
</evidence>
<evidence type="ECO:0000255" key="2">
    <source>
        <dbReference type="PROSITE-ProRule" id="PRU01231"/>
    </source>
</evidence>
<comment type="function">
    <text evidence="1">An essential GTPase which binds GTP, GDP and possibly (p)ppGpp with moderate affinity, with high nucleotide exchange rates and a fairly low GTP hydrolysis rate. Plays a role in control of the cell cycle, stress response, ribosome biogenesis and in those bacteria that undergo differentiation, in morphogenesis control.</text>
</comment>
<comment type="cofactor">
    <cofactor evidence="1">
        <name>Mg(2+)</name>
        <dbReference type="ChEBI" id="CHEBI:18420"/>
    </cofactor>
</comment>
<comment type="subunit">
    <text evidence="1">Monomer.</text>
</comment>
<comment type="subcellular location">
    <subcellularLocation>
        <location evidence="1">Cytoplasm</location>
    </subcellularLocation>
</comment>
<comment type="similarity">
    <text evidence="1">Belongs to the TRAFAC class OBG-HflX-like GTPase superfamily. OBG GTPase family.</text>
</comment>
<sequence>MKFIDRVKIHVKAGDGGRGCLSFRREKFIPKGGPDGGDGGRGGNIVLRVDEGLGTLLDLRYQIHYKAQRGAHGMGKNCHGKNGEDLEIRVPPGVLVYDAETDELLADLTEGCHELVVVRGGMGGRGNARFATSTNRAPRHVQPGVEGEERWLRLELKLLADVGLLGMPNAGKSTLISAVSAARPKIADYPFTTLVPNLGVVRCGGFKTFVMADIPGLIEGASEGHGLGTRFLRHVERTDLFLHLVDLSDLQEGDPMERFALINRELARHNPELMEKPQLVVLSKIDVSEVRERLDAVRAAFAAEGIRTLAISAVTGEGLKELVAEVARELEKLRASRLQADQKAAEEDEPWQPDLS</sequence>
<gene>
    <name evidence="1" type="primary">obg</name>
    <name type="ordered locus">Pcar_2581</name>
</gene>
<accession>Q3A1D8</accession>